<dbReference type="EC" id="1.2.1.70" evidence="1"/>
<dbReference type="EMBL" id="CP000673">
    <property type="protein sequence ID" value="EDK32711.1"/>
    <property type="status" value="ALT_INIT"/>
    <property type="molecule type" value="Genomic_DNA"/>
</dbReference>
<dbReference type="SMR" id="A5N5Y0"/>
<dbReference type="STRING" id="431943.CKL_0657"/>
<dbReference type="KEGG" id="ckl:CKL_0657"/>
<dbReference type="eggNOG" id="COG0373">
    <property type="taxonomic scope" value="Bacteria"/>
</dbReference>
<dbReference type="HOGENOM" id="CLU_035113_1_0_9"/>
<dbReference type="UniPathway" id="UPA00251">
    <property type="reaction ID" value="UER00316"/>
</dbReference>
<dbReference type="Proteomes" id="UP000002411">
    <property type="component" value="Chromosome"/>
</dbReference>
<dbReference type="GO" id="GO:0008883">
    <property type="term" value="F:glutamyl-tRNA reductase activity"/>
    <property type="evidence" value="ECO:0007669"/>
    <property type="project" value="UniProtKB-UniRule"/>
</dbReference>
<dbReference type="GO" id="GO:0050661">
    <property type="term" value="F:NADP binding"/>
    <property type="evidence" value="ECO:0007669"/>
    <property type="project" value="InterPro"/>
</dbReference>
<dbReference type="GO" id="GO:0019353">
    <property type="term" value="P:protoporphyrinogen IX biosynthetic process from glutamate"/>
    <property type="evidence" value="ECO:0007669"/>
    <property type="project" value="TreeGrafter"/>
</dbReference>
<dbReference type="Gene3D" id="3.30.460.30">
    <property type="entry name" value="Glutamyl-tRNA reductase, N-terminal domain"/>
    <property type="match status" value="1"/>
</dbReference>
<dbReference type="Gene3D" id="3.40.50.720">
    <property type="entry name" value="NAD(P)-binding Rossmann-like Domain"/>
    <property type="match status" value="1"/>
</dbReference>
<dbReference type="HAMAP" id="MF_00087">
    <property type="entry name" value="Glu_tRNA_reductase"/>
    <property type="match status" value="1"/>
</dbReference>
<dbReference type="InterPro" id="IPR000343">
    <property type="entry name" value="4pyrrol_synth_GluRdtase"/>
</dbReference>
<dbReference type="InterPro" id="IPR015896">
    <property type="entry name" value="4pyrrol_synth_GluRdtase_dimer"/>
</dbReference>
<dbReference type="InterPro" id="IPR015895">
    <property type="entry name" value="4pyrrol_synth_GluRdtase_N"/>
</dbReference>
<dbReference type="InterPro" id="IPR018214">
    <property type="entry name" value="GluRdtase_CS"/>
</dbReference>
<dbReference type="InterPro" id="IPR036343">
    <property type="entry name" value="GluRdtase_N_sf"/>
</dbReference>
<dbReference type="InterPro" id="IPR036291">
    <property type="entry name" value="NAD(P)-bd_dom_sf"/>
</dbReference>
<dbReference type="InterPro" id="IPR006151">
    <property type="entry name" value="Shikm_DH/Glu-tRNA_Rdtase"/>
</dbReference>
<dbReference type="NCBIfam" id="TIGR01035">
    <property type="entry name" value="hemA"/>
    <property type="match status" value="1"/>
</dbReference>
<dbReference type="PANTHER" id="PTHR43013">
    <property type="entry name" value="GLUTAMYL-TRNA REDUCTASE"/>
    <property type="match status" value="1"/>
</dbReference>
<dbReference type="PANTHER" id="PTHR43013:SF1">
    <property type="entry name" value="GLUTAMYL-TRNA REDUCTASE"/>
    <property type="match status" value="1"/>
</dbReference>
<dbReference type="Pfam" id="PF00745">
    <property type="entry name" value="GlutR_dimer"/>
    <property type="match status" value="1"/>
</dbReference>
<dbReference type="Pfam" id="PF05201">
    <property type="entry name" value="GlutR_N"/>
    <property type="match status" value="1"/>
</dbReference>
<dbReference type="Pfam" id="PF01488">
    <property type="entry name" value="Shikimate_DH"/>
    <property type="match status" value="1"/>
</dbReference>
<dbReference type="PIRSF" id="PIRSF000445">
    <property type="entry name" value="4pyrrol_synth_GluRdtase"/>
    <property type="match status" value="1"/>
</dbReference>
<dbReference type="SUPFAM" id="SSF69742">
    <property type="entry name" value="Glutamyl tRNA-reductase catalytic, N-terminal domain"/>
    <property type="match status" value="1"/>
</dbReference>
<dbReference type="SUPFAM" id="SSF51735">
    <property type="entry name" value="NAD(P)-binding Rossmann-fold domains"/>
    <property type="match status" value="1"/>
</dbReference>
<dbReference type="PROSITE" id="PS00747">
    <property type="entry name" value="GLUTR"/>
    <property type="match status" value="1"/>
</dbReference>
<name>HEM1_CLOK5</name>
<protein>
    <recommendedName>
        <fullName evidence="1">Glutamyl-tRNA reductase</fullName>
        <shortName evidence="1">GluTR</shortName>
        <ecNumber evidence="1">1.2.1.70</ecNumber>
    </recommendedName>
</protein>
<sequence length="399" mass="46435">MIQLIGIKSQCDIGIRQKFSITSEVLEGKLKYINELVGSVLILSTCNRTEIYVDSNLEEKKLIDTVFYGLDWDYDLVSYIFYIKDKYAIKHLMEVSCGFHSKILGEDQILGQIKTAYDAALEAKTIKGKLQRLFQKAITCGKEFKHICESYRIPVSIPSIVAKEILNMDIRKYMIIGFGKIGQLLFKYLNNSQAQIIYIAVRDLNKVHDSYKKCGKIRFISFKDRKSYYNDIDCIVSCTSAPDKIISKGDLPCRKLTIFDLAVPEDIDRNVLDLDNVTLYDIDNISVIDEKNKAIRKKTMGKYRYILENHIDKFIKWEKLHQLSPEIQKVKKYGDEICEKRITTFKNKKHTKDNDILVKTMIESTARFYINRAIEVMKEEKLNGREEECLRLINKIFCK</sequence>
<evidence type="ECO:0000255" key="1">
    <source>
        <dbReference type="HAMAP-Rule" id="MF_00087"/>
    </source>
</evidence>
<evidence type="ECO:0000305" key="2"/>
<organism>
    <name type="scientific">Clostridium kluyveri (strain ATCC 8527 / DSM 555 / NBRC 12016 / NCIMB 10680 / K1)</name>
    <dbReference type="NCBI Taxonomy" id="431943"/>
    <lineage>
        <taxon>Bacteria</taxon>
        <taxon>Bacillati</taxon>
        <taxon>Bacillota</taxon>
        <taxon>Clostridia</taxon>
        <taxon>Eubacteriales</taxon>
        <taxon>Clostridiaceae</taxon>
        <taxon>Clostridium</taxon>
    </lineage>
</organism>
<comment type="function">
    <text evidence="1">Catalyzes the NADPH-dependent reduction of glutamyl-tRNA(Glu) to glutamate 1-semialdehyde (GSA).</text>
</comment>
<comment type="catalytic activity">
    <reaction evidence="1">
        <text>(S)-4-amino-5-oxopentanoate + tRNA(Glu) + NADP(+) = L-glutamyl-tRNA(Glu) + NADPH + H(+)</text>
        <dbReference type="Rhea" id="RHEA:12344"/>
        <dbReference type="Rhea" id="RHEA-COMP:9663"/>
        <dbReference type="Rhea" id="RHEA-COMP:9680"/>
        <dbReference type="ChEBI" id="CHEBI:15378"/>
        <dbReference type="ChEBI" id="CHEBI:57501"/>
        <dbReference type="ChEBI" id="CHEBI:57783"/>
        <dbReference type="ChEBI" id="CHEBI:58349"/>
        <dbReference type="ChEBI" id="CHEBI:78442"/>
        <dbReference type="ChEBI" id="CHEBI:78520"/>
        <dbReference type="EC" id="1.2.1.70"/>
    </reaction>
</comment>
<comment type="pathway">
    <text evidence="1">Porphyrin-containing compound metabolism; protoporphyrin-IX biosynthesis; 5-aminolevulinate from L-glutamyl-tRNA(Glu): step 1/2.</text>
</comment>
<comment type="subunit">
    <text evidence="1">Homodimer.</text>
</comment>
<comment type="domain">
    <text evidence="1">Possesses an unusual extended V-shaped dimeric structure with each monomer consisting of three distinct domains arranged along a curved 'spinal' alpha-helix. The N-terminal catalytic domain specifically recognizes the glutamate moiety of the substrate. The second domain is the NADPH-binding domain, and the third C-terminal domain is responsible for dimerization.</text>
</comment>
<comment type="miscellaneous">
    <text evidence="1">During catalysis, the active site Cys acts as a nucleophile attacking the alpha-carbonyl group of tRNA-bound glutamate with the formation of a thioester intermediate between enzyme and glutamate, and the concomitant release of tRNA(Glu). The thioester intermediate is finally reduced by direct hydride transfer from NADPH, to form the product GSA.</text>
</comment>
<comment type="similarity">
    <text evidence="1">Belongs to the glutamyl-tRNA reductase family.</text>
</comment>
<comment type="sequence caution" evidence="2">
    <conflict type="erroneous initiation">
        <sequence resource="EMBL-CDS" id="EDK32711"/>
    </conflict>
</comment>
<accession>A5N5Y0</accession>
<gene>
    <name evidence="1" type="primary">hemA</name>
    <name type="ordered locus">CKL_0657</name>
</gene>
<reference key="1">
    <citation type="journal article" date="2008" name="Proc. Natl. Acad. Sci. U.S.A.">
        <title>The genome of Clostridium kluyveri, a strict anaerobe with unique metabolic features.</title>
        <authorList>
            <person name="Seedorf H."/>
            <person name="Fricke W.F."/>
            <person name="Veith B."/>
            <person name="Brueggemann H."/>
            <person name="Liesegang H."/>
            <person name="Strittmatter A."/>
            <person name="Miethke M."/>
            <person name="Buckel W."/>
            <person name="Hinderberger J."/>
            <person name="Li F."/>
            <person name="Hagemeier C."/>
            <person name="Thauer R.K."/>
            <person name="Gottschalk G."/>
        </authorList>
    </citation>
    <scope>NUCLEOTIDE SEQUENCE [LARGE SCALE GENOMIC DNA]</scope>
    <source>
        <strain>ATCC 8527 / DSM 555 / NBRC 12016 / NCIMB 10680 / K1</strain>
    </source>
</reference>
<keyword id="KW-0521">NADP</keyword>
<keyword id="KW-0560">Oxidoreductase</keyword>
<keyword id="KW-0627">Porphyrin biosynthesis</keyword>
<keyword id="KW-1185">Reference proteome</keyword>
<feature type="chain" id="PRO_0000335022" description="Glutamyl-tRNA reductase">
    <location>
        <begin position="1"/>
        <end position="399"/>
    </location>
</feature>
<feature type="active site" description="Nucleophile" evidence="1">
    <location>
        <position position="46"/>
    </location>
</feature>
<feature type="binding site" evidence="1">
    <location>
        <begin position="45"/>
        <end position="48"/>
    </location>
    <ligand>
        <name>substrate</name>
    </ligand>
</feature>
<feature type="binding site" evidence="1">
    <location>
        <position position="101"/>
    </location>
    <ligand>
        <name>substrate</name>
    </ligand>
</feature>
<feature type="binding site" evidence="1">
    <location>
        <begin position="106"/>
        <end position="108"/>
    </location>
    <ligand>
        <name>substrate</name>
    </ligand>
</feature>
<feature type="binding site" evidence="1">
    <location>
        <position position="112"/>
    </location>
    <ligand>
        <name>substrate</name>
    </ligand>
</feature>
<feature type="binding site" evidence="1">
    <location>
        <begin position="177"/>
        <end position="182"/>
    </location>
    <ligand>
        <name>NADP(+)</name>
        <dbReference type="ChEBI" id="CHEBI:58349"/>
    </ligand>
</feature>
<feature type="site" description="Important for activity" evidence="1">
    <location>
        <position position="91"/>
    </location>
</feature>
<proteinExistence type="inferred from homology"/>